<comment type="similarity">
    <text evidence="1">Belongs to the eukaryotic ribosomal protein eS17 family.</text>
</comment>
<protein>
    <recommendedName>
        <fullName evidence="1">Small ribosomal subunit protein eS17</fullName>
    </recommendedName>
    <alternativeName>
        <fullName evidence="2">30S ribosomal protein S17e</fullName>
    </alternativeName>
</protein>
<evidence type="ECO:0000255" key="1">
    <source>
        <dbReference type="HAMAP-Rule" id="MF_00511"/>
    </source>
</evidence>
<evidence type="ECO:0000305" key="2"/>
<organism>
    <name type="scientific">Sulfolobus acidocaldarius (strain ATCC 33909 / DSM 639 / JCM 8929 / NBRC 15157 / NCIMB 11770)</name>
    <dbReference type="NCBI Taxonomy" id="330779"/>
    <lineage>
        <taxon>Archaea</taxon>
        <taxon>Thermoproteota</taxon>
        <taxon>Thermoprotei</taxon>
        <taxon>Sulfolobales</taxon>
        <taxon>Sulfolobaceae</taxon>
        <taxon>Sulfolobus</taxon>
    </lineage>
</organism>
<dbReference type="EMBL" id="CP000077">
    <property type="protein sequence ID" value="AAY80054.1"/>
    <property type="molecule type" value="Genomic_DNA"/>
</dbReference>
<dbReference type="RefSeq" id="WP_011277556.1">
    <property type="nucleotide sequence ID" value="NC_007181.1"/>
</dbReference>
<dbReference type="PDB" id="8HKX">
    <property type="method" value="EM"/>
    <property type="resolution" value="3.14 A"/>
    <property type="chains" value="S17E=2-63"/>
</dbReference>
<dbReference type="PDB" id="8HKY">
    <property type="method" value="EM"/>
    <property type="resolution" value="4.45 A"/>
    <property type="chains" value="S17E=2-63"/>
</dbReference>
<dbReference type="PDB" id="8HKZ">
    <property type="method" value="EM"/>
    <property type="resolution" value="4.78 A"/>
    <property type="chains" value="S17E=2-63"/>
</dbReference>
<dbReference type="PDB" id="8HL1">
    <property type="method" value="EM"/>
    <property type="resolution" value="3.93 A"/>
    <property type="chains" value="S17E=2-63"/>
</dbReference>
<dbReference type="PDB" id="8HL2">
    <property type="method" value="EM"/>
    <property type="resolution" value="4.10 A"/>
    <property type="chains" value="S17E=2-63"/>
</dbReference>
<dbReference type="PDB" id="8HL3">
    <property type="method" value="EM"/>
    <property type="resolution" value="4.80 A"/>
    <property type="chains" value="S17E=2-63"/>
</dbReference>
<dbReference type="PDB" id="8HL4">
    <property type="method" value="EM"/>
    <property type="resolution" value="4.62 A"/>
    <property type="chains" value="S17E=2-63"/>
</dbReference>
<dbReference type="PDB" id="8HL5">
    <property type="method" value="EM"/>
    <property type="resolution" value="5.72 A"/>
    <property type="chains" value="S17E=2-63"/>
</dbReference>
<dbReference type="PDB" id="8WKP">
    <property type="method" value="EM"/>
    <property type="resolution" value="4.62 A"/>
    <property type="chains" value="S17E=2-63"/>
</dbReference>
<dbReference type="PDB" id="8WQ2">
    <property type="method" value="EM"/>
    <property type="resolution" value="4.10 A"/>
    <property type="chains" value="S17E=2-63"/>
</dbReference>
<dbReference type="PDB" id="8WQ4">
    <property type="method" value="EM"/>
    <property type="resolution" value="4.53 A"/>
    <property type="chains" value="S17E=2-63"/>
</dbReference>
<dbReference type="PDBsum" id="8HKX"/>
<dbReference type="PDBsum" id="8HKY"/>
<dbReference type="PDBsum" id="8HKZ"/>
<dbReference type="PDBsum" id="8HL1"/>
<dbReference type="PDBsum" id="8HL2"/>
<dbReference type="PDBsum" id="8HL3"/>
<dbReference type="PDBsum" id="8HL4"/>
<dbReference type="PDBsum" id="8HL5"/>
<dbReference type="PDBsum" id="8WKP"/>
<dbReference type="PDBsum" id="8WQ2"/>
<dbReference type="PDBsum" id="8WQ4"/>
<dbReference type="EMDB" id="EMD-34862"/>
<dbReference type="EMDB" id="EMD-34863"/>
<dbReference type="EMDB" id="EMD-34864"/>
<dbReference type="EMDB" id="EMD-34866"/>
<dbReference type="EMDB" id="EMD-34867"/>
<dbReference type="EMDB" id="EMD-34868"/>
<dbReference type="EMDB" id="EMD-34869"/>
<dbReference type="EMDB" id="EMD-34870"/>
<dbReference type="EMDB" id="EMD-37604"/>
<dbReference type="EMDB" id="EMD-37733"/>
<dbReference type="EMDB" id="EMD-37734"/>
<dbReference type="SMR" id="Q4JAX5"/>
<dbReference type="STRING" id="330779.Saci_0670"/>
<dbReference type="GeneID" id="14551189"/>
<dbReference type="KEGG" id="sai:Saci_0670"/>
<dbReference type="PATRIC" id="fig|330779.12.peg.640"/>
<dbReference type="eggNOG" id="arCOG01885">
    <property type="taxonomic scope" value="Archaea"/>
</dbReference>
<dbReference type="HOGENOM" id="CLU_176720_0_0_2"/>
<dbReference type="Proteomes" id="UP000001018">
    <property type="component" value="Chromosome"/>
</dbReference>
<dbReference type="GO" id="GO:0005829">
    <property type="term" value="C:cytosol"/>
    <property type="evidence" value="ECO:0007669"/>
    <property type="project" value="UniProtKB-ARBA"/>
</dbReference>
<dbReference type="GO" id="GO:1990904">
    <property type="term" value="C:ribonucleoprotein complex"/>
    <property type="evidence" value="ECO:0007669"/>
    <property type="project" value="UniProtKB-KW"/>
</dbReference>
<dbReference type="GO" id="GO:0005840">
    <property type="term" value="C:ribosome"/>
    <property type="evidence" value="ECO:0007669"/>
    <property type="project" value="UniProtKB-KW"/>
</dbReference>
<dbReference type="GO" id="GO:0003735">
    <property type="term" value="F:structural constituent of ribosome"/>
    <property type="evidence" value="ECO:0007669"/>
    <property type="project" value="InterPro"/>
</dbReference>
<dbReference type="GO" id="GO:0006412">
    <property type="term" value="P:translation"/>
    <property type="evidence" value="ECO:0007669"/>
    <property type="project" value="UniProtKB-UniRule"/>
</dbReference>
<dbReference type="Gene3D" id="1.10.60.20">
    <property type="entry name" value="Ribosomal protein S17e-like"/>
    <property type="match status" value="1"/>
</dbReference>
<dbReference type="HAMAP" id="MF_00511">
    <property type="entry name" value="Ribosomal_eS17"/>
    <property type="match status" value="1"/>
</dbReference>
<dbReference type="InterPro" id="IPR001210">
    <property type="entry name" value="Ribosomal_eS17"/>
</dbReference>
<dbReference type="InterPro" id="IPR018273">
    <property type="entry name" value="Ribosomal_eS17_CS"/>
</dbReference>
<dbReference type="InterPro" id="IPR036401">
    <property type="entry name" value="Ribosomal_eS17_sf"/>
</dbReference>
<dbReference type="NCBIfam" id="NF002242">
    <property type="entry name" value="PRK01151.1"/>
    <property type="match status" value="1"/>
</dbReference>
<dbReference type="PANTHER" id="PTHR10732">
    <property type="entry name" value="40S RIBOSOMAL PROTEIN S17"/>
    <property type="match status" value="1"/>
</dbReference>
<dbReference type="PANTHER" id="PTHR10732:SF0">
    <property type="entry name" value="40S RIBOSOMAL PROTEIN S17"/>
    <property type="match status" value="1"/>
</dbReference>
<dbReference type="Pfam" id="PF00833">
    <property type="entry name" value="Ribosomal_S17e"/>
    <property type="match status" value="1"/>
</dbReference>
<dbReference type="SUPFAM" id="SSF116820">
    <property type="entry name" value="Rps17e-like"/>
    <property type="match status" value="1"/>
</dbReference>
<dbReference type="PROSITE" id="PS00712">
    <property type="entry name" value="RIBOSOMAL_S17E"/>
    <property type="match status" value="1"/>
</dbReference>
<name>RS17E_SULAC</name>
<accession>Q4JAX5</accession>
<feature type="chain" id="PRO_0000141565" description="Small ribosomal subunit protein eS17">
    <location>
        <begin position="1"/>
        <end position="82"/>
    </location>
</feature>
<sequence>MGNVYTKDIKRVARELYDKFKDQASDKYDDNKKLVDEYVNVSSKKVKNRIAGYLTRYVKISKNKVEAQEASEELEEDLESET</sequence>
<keyword id="KW-0002">3D-structure</keyword>
<keyword id="KW-1185">Reference proteome</keyword>
<keyword id="KW-0687">Ribonucleoprotein</keyword>
<keyword id="KW-0689">Ribosomal protein</keyword>
<reference key="1">
    <citation type="journal article" date="2005" name="J. Bacteriol.">
        <title>The genome of Sulfolobus acidocaldarius, a model organism of the Crenarchaeota.</title>
        <authorList>
            <person name="Chen L."/>
            <person name="Bruegger K."/>
            <person name="Skovgaard M."/>
            <person name="Redder P."/>
            <person name="She Q."/>
            <person name="Torarinsson E."/>
            <person name="Greve B."/>
            <person name="Awayez M."/>
            <person name="Zibat A."/>
            <person name="Klenk H.-P."/>
            <person name="Garrett R.A."/>
        </authorList>
    </citation>
    <scope>NUCLEOTIDE SEQUENCE [LARGE SCALE GENOMIC DNA]</scope>
    <source>
        <strain>ATCC 33909 / DSM 639 / JCM 8929 / NBRC 15157 / NCIMB 11770</strain>
    </source>
</reference>
<gene>
    <name evidence="1" type="primary">rps17e</name>
    <name type="ordered locus">Saci_0670</name>
</gene>
<proteinExistence type="evidence at protein level"/>